<keyword id="KW-0131">Cell cycle</keyword>
<keyword id="KW-0132">Cell division</keyword>
<keyword id="KW-0159">Chromosome partition</keyword>
<keyword id="KW-0498">Mitosis</keyword>
<keyword id="KW-0539">Nucleus</keyword>
<keyword id="KW-1185">Reference proteome</keyword>
<keyword id="KW-0677">Repeat</keyword>
<keyword id="KW-0802">TPR repeat</keyword>
<name>SCC4_DROME</name>
<comment type="function">
    <text evidence="1">Required for association of the cohesin complex with chromatin during interphase. Plays a role in sister chromatid cohesion and normal progression through prometaphase (By similarity).</text>
</comment>
<comment type="subunit">
    <text evidence="1">Interacts with Nipped-B to form the cohesin loading complex.</text>
</comment>
<comment type="subcellular location">
    <subcellularLocation>
        <location evidence="1">Nucleus</location>
        <location evidence="1">Nucleoplasm</location>
    </subcellularLocation>
    <text evidence="1">Binds to chromatin from the end of mitosis until prophase.</text>
</comment>
<comment type="similarity">
    <text evidence="3">Belongs to the SCC4/mau-2 family.</text>
</comment>
<organism>
    <name type="scientific">Drosophila melanogaster</name>
    <name type="common">Fruit fly</name>
    <dbReference type="NCBI Taxonomy" id="7227"/>
    <lineage>
        <taxon>Eukaryota</taxon>
        <taxon>Metazoa</taxon>
        <taxon>Ecdysozoa</taxon>
        <taxon>Arthropoda</taxon>
        <taxon>Hexapoda</taxon>
        <taxon>Insecta</taxon>
        <taxon>Pterygota</taxon>
        <taxon>Neoptera</taxon>
        <taxon>Endopterygota</taxon>
        <taxon>Diptera</taxon>
        <taxon>Brachycera</taxon>
        <taxon>Muscomorpha</taxon>
        <taxon>Ephydroidea</taxon>
        <taxon>Drosophilidae</taxon>
        <taxon>Drosophila</taxon>
        <taxon>Sophophora</taxon>
    </lineage>
</organism>
<sequence length="632" mass="71217">MSASTSTSTAASQDACYISLLGLAEYFRTSQPPNIKKCIQCLQALFTFMPPSKVEARTHLQMGQILMAYTKNIDLARQHLEKAWSISEPLPNFDVKFDTASLLAQLHLQTDRNSHQAKAMLRRAVELSQNNVYWHCKLLLQLAQIHASDREYSLASELLAVGAESADEASATYLKVLFLLSRAMILMIERKTNDVLALLNSAGQIIDNNIPNPHQKEYLKVFFLVLQVCYYLALGQVKTVKPSLKQLQMSIQTIMAPNWPSDEAIFGANQLEMFVWLPKEQLYVLVYLVTVSHSMMAGYMDKAQKYTEKALTQIEKLKQQEDKPILSVFKVILLEHIVMCRMVMGNRELAIREIAAARDVCMAAPQRSLLRRHSAQLHCLIGLYSMSTNLFEHAERQFVVCVSETSERDLKLFANLNLAIIYLRTKRDTDLKQILDAVSTENTHTYSSQALMGGFYYVQGLHAFHKNSFHEAKRFLRETLKMANAEDLNRLTSCSLVLLSHVFLSIGNSKESMNMVTPAMQLASKIPDIHVQLWGSAILKDLHRMSKDVQHEKDAYANHVKYSENLIADQRKCVQSAHHELVNWFQGDPPVTSGPPAAPVLLMPESSVTASVPVIASTSTAMQPAGQYGQFY</sequence>
<dbReference type="EMBL" id="AE014297">
    <property type="protein sequence ID" value="AAF55140.1"/>
    <property type="molecule type" value="Genomic_DNA"/>
</dbReference>
<dbReference type="EMBL" id="AY069560">
    <property type="protein sequence ID" value="AAL39705.1"/>
    <property type="molecule type" value="mRNA"/>
</dbReference>
<dbReference type="RefSeq" id="NP_650428.1">
    <property type="nucleotide sequence ID" value="NM_142171.4"/>
</dbReference>
<dbReference type="BioGRID" id="66894">
    <property type="interactions" value="2"/>
</dbReference>
<dbReference type="DIP" id="DIP-29197N"/>
<dbReference type="FunCoup" id="Q9VFC0">
    <property type="interactions" value="2824"/>
</dbReference>
<dbReference type="IntAct" id="Q9VFC0">
    <property type="interactions" value="3"/>
</dbReference>
<dbReference type="STRING" id="7227.FBpp0082507"/>
<dbReference type="PaxDb" id="7227-FBpp0082507"/>
<dbReference type="DNASU" id="41830"/>
<dbReference type="EnsemblMetazoa" id="FBtr0083048">
    <property type="protein sequence ID" value="FBpp0082507"/>
    <property type="gene ID" value="FBgn0038300"/>
</dbReference>
<dbReference type="GeneID" id="41830"/>
<dbReference type="KEGG" id="dme:Dmel_CG4203"/>
<dbReference type="UCSC" id="CG4203-RA">
    <property type="organism name" value="d. melanogaster"/>
</dbReference>
<dbReference type="AGR" id="FB:FBgn0038300"/>
<dbReference type="CTD" id="23383"/>
<dbReference type="FlyBase" id="FBgn0038300">
    <property type="gene designation" value="Mau2"/>
</dbReference>
<dbReference type="VEuPathDB" id="VectorBase:FBgn0038300"/>
<dbReference type="eggNOG" id="KOG2300">
    <property type="taxonomic scope" value="Eukaryota"/>
</dbReference>
<dbReference type="GeneTree" id="ENSGT00390000012198"/>
<dbReference type="HOGENOM" id="CLU_030238_0_0_1"/>
<dbReference type="InParanoid" id="Q9VFC0"/>
<dbReference type="OMA" id="QDAWYLS"/>
<dbReference type="OrthoDB" id="5565328at2759"/>
<dbReference type="PhylomeDB" id="Q9VFC0"/>
<dbReference type="Reactome" id="R-DME-2470946">
    <property type="pathway name" value="Cohesin Loading onto Chromatin"/>
</dbReference>
<dbReference type="SignaLink" id="Q9VFC0"/>
<dbReference type="BioGRID-ORCS" id="41830">
    <property type="hits" value="0 hits in 1 CRISPR screen"/>
</dbReference>
<dbReference type="GenomeRNAi" id="41830"/>
<dbReference type="PRO" id="PR:Q9VFC0"/>
<dbReference type="Proteomes" id="UP000000803">
    <property type="component" value="Chromosome 3R"/>
</dbReference>
<dbReference type="Bgee" id="FBgn0038300">
    <property type="expression patterns" value="Expressed in egg cell and 28 other cell types or tissues"/>
</dbReference>
<dbReference type="GO" id="GO:0000785">
    <property type="term" value="C:chromatin"/>
    <property type="evidence" value="ECO:0000250"/>
    <property type="project" value="UniProtKB"/>
</dbReference>
<dbReference type="GO" id="GO:0005654">
    <property type="term" value="C:nucleoplasm"/>
    <property type="evidence" value="ECO:0000250"/>
    <property type="project" value="UniProtKB"/>
</dbReference>
<dbReference type="GO" id="GO:0005634">
    <property type="term" value="C:nucleus"/>
    <property type="evidence" value="ECO:0000250"/>
    <property type="project" value="UniProtKB"/>
</dbReference>
<dbReference type="GO" id="GO:0032116">
    <property type="term" value="C:SMC loading complex"/>
    <property type="evidence" value="ECO:0000250"/>
    <property type="project" value="UniProtKB"/>
</dbReference>
<dbReference type="GO" id="GO:0007411">
    <property type="term" value="P:axon guidance"/>
    <property type="evidence" value="ECO:0000250"/>
    <property type="project" value="FlyBase"/>
</dbReference>
<dbReference type="GO" id="GO:0051301">
    <property type="term" value="P:cell division"/>
    <property type="evidence" value="ECO:0007669"/>
    <property type="project" value="UniProtKB-KW"/>
</dbReference>
<dbReference type="GO" id="GO:0007059">
    <property type="term" value="P:chromosome segregation"/>
    <property type="evidence" value="ECO:0007669"/>
    <property type="project" value="UniProtKB-KW"/>
</dbReference>
<dbReference type="GO" id="GO:0034088">
    <property type="term" value="P:maintenance of mitotic sister chromatid cohesion"/>
    <property type="evidence" value="ECO:0000250"/>
    <property type="project" value="UniProtKB"/>
</dbReference>
<dbReference type="FunFam" id="1.25.40.10:FF:000373">
    <property type="entry name" value="MAU2 chromatid cohesion factor homolog"/>
    <property type="match status" value="1"/>
</dbReference>
<dbReference type="FunFam" id="1.25.40.10:FF:000915">
    <property type="entry name" value="MAU2 chromatid cohesion factor homolog"/>
    <property type="match status" value="1"/>
</dbReference>
<dbReference type="Gene3D" id="1.25.40.10">
    <property type="entry name" value="Tetratricopeptide repeat domain"/>
    <property type="match status" value="2"/>
</dbReference>
<dbReference type="InterPro" id="IPR019440">
    <property type="entry name" value="MAU2"/>
</dbReference>
<dbReference type="InterPro" id="IPR011990">
    <property type="entry name" value="TPR-like_helical_dom_sf"/>
</dbReference>
<dbReference type="PANTHER" id="PTHR21394">
    <property type="entry name" value="MAU2 CHROMATID COHESION FACTOR HOMOLOG"/>
    <property type="match status" value="1"/>
</dbReference>
<dbReference type="Pfam" id="PF10345">
    <property type="entry name" value="Cohesin_load"/>
    <property type="match status" value="1"/>
</dbReference>
<dbReference type="SUPFAM" id="SSF48452">
    <property type="entry name" value="TPR-like"/>
    <property type="match status" value="1"/>
</dbReference>
<feature type="chain" id="PRO_0000382732" description="MAU2 chromatid cohesion factor homolog">
    <location>
        <begin position="1"/>
        <end position="632"/>
    </location>
</feature>
<feature type="repeat" description="TPR 1">
    <location>
        <begin position="453"/>
        <end position="486"/>
    </location>
</feature>
<feature type="repeat" description="TPR 2">
    <location>
        <begin position="493"/>
        <end position="526"/>
    </location>
</feature>
<protein>
    <recommendedName>
        <fullName evidence="2">MAU2 chromatid cohesion factor homolog</fullName>
    </recommendedName>
    <alternativeName>
        <fullName evidence="2">Cohesin loading complex subunit SCC4 homolog</fullName>
    </alternativeName>
    <alternativeName>
        <fullName evidence="4">Mau2 sister chromatid cohesion factor</fullName>
    </alternativeName>
</protein>
<gene>
    <name evidence="4" type="primary">Mau2</name>
    <name evidence="4" type="ORF">CG4203</name>
</gene>
<proteinExistence type="evidence at transcript level"/>
<evidence type="ECO:0000250" key="1"/>
<evidence type="ECO:0000250" key="2">
    <source>
        <dbReference type="UniProtKB" id="Q9Y6X3"/>
    </source>
</evidence>
<evidence type="ECO:0000305" key="3"/>
<evidence type="ECO:0000312" key="4">
    <source>
        <dbReference type="FlyBase" id="FBgn0038300"/>
    </source>
</evidence>
<accession>Q9VFC0</accession>
<reference key="1">
    <citation type="journal article" date="2000" name="Science">
        <title>The genome sequence of Drosophila melanogaster.</title>
        <authorList>
            <person name="Adams M.D."/>
            <person name="Celniker S.E."/>
            <person name="Holt R.A."/>
            <person name="Evans C.A."/>
            <person name="Gocayne J.D."/>
            <person name="Amanatides P.G."/>
            <person name="Scherer S.E."/>
            <person name="Li P.W."/>
            <person name="Hoskins R.A."/>
            <person name="Galle R.F."/>
            <person name="George R.A."/>
            <person name="Lewis S.E."/>
            <person name="Richards S."/>
            <person name="Ashburner M."/>
            <person name="Henderson S.N."/>
            <person name="Sutton G.G."/>
            <person name="Wortman J.R."/>
            <person name="Yandell M.D."/>
            <person name="Zhang Q."/>
            <person name="Chen L.X."/>
            <person name="Brandon R.C."/>
            <person name="Rogers Y.-H.C."/>
            <person name="Blazej R.G."/>
            <person name="Champe M."/>
            <person name="Pfeiffer B.D."/>
            <person name="Wan K.H."/>
            <person name="Doyle C."/>
            <person name="Baxter E.G."/>
            <person name="Helt G."/>
            <person name="Nelson C.R."/>
            <person name="Miklos G.L.G."/>
            <person name="Abril J.F."/>
            <person name="Agbayani A."/>
            <person name="An H.-J."/>
            <person name="Andrews-Pfannkoch C."/>
            <person name="Baldwin D."/>
            <person name="Ballew R.M."/>
            <person name="Basu A."/>
            <person name="Baxendale J."/>
            <person name="Bayraktaroglu L."/>
            <person name="Beasley E.M."/>
            <person name="Beeson K.Y."/>
            <person name="Benos P.V."/>
            <person name="Berman B.P."/>
            <person name="Bhandari D."/>
            <person name="Bolshakov S."/>
            <person name="Borkova D."/>
            <person name="Botchan M.R."/>
            <person name="Bouck J."/>
            <person name="Brokstein P."/>
            <person name="Brottier P."/>
            <person name="Burtis K.C."/>
            <person name="Busam D.A."/>
            <person name="Butler H."/>
            <person name="Cadieu E."/>
            <person name="Center A."/>
            <person name="Chandra I."/>
            <person name="Cherry J.M."/>
            <person name="Cawley S."/>
            <person name="Dahlke C."/>
            <person name="Davenport L.B."/>
            <person name="Davies P."/>
            <person name="de Pablos B."/>
            <person name="Delcher A."/>
            <person name="Deng Z."/>
            <person name="Mays A.D."/>
            <person name="Dew I."/>
            <person name="Dietz S.M."/>
            <person name="Dodson K."/>
            <person name="Doup L.E."/>
            <person name="Downes M."/>
            <person name="Dugan-Rocha S."/>
            <person name="Dunkov B.C."/>
            <person name="Dunn P."/>
            <person name="Durbin K.J."/>
            <person name="Evangelista C.C."/>
            <person name="Ferraz C."/>
            <person name="Ferriera S."/>
            <person name="Fleischmann W."/>
            <person name="Fosler C."/>
            <person name="Gabrielian A.E."/>
            <person name="Garg N.S."/>
            <person name="Gelbart W.M."/>
            <person name="Glasser K."/>
            <person name="Glodek A."/>
            <person name="Gong F."/>
            <person name="Gorrell J.H."/>
            <person name="Gu Z."/>
            <person name="Guan P."/>
            <person name="Harris M."/>
            <person name="Harris N.L."/>
            <person name="Harvey D.A."/>
            <person name="Heiman T.J."/>
            <person name="Hernandez J.R."/>
            <person name="Houck J."/>
            <person name="Hostin D."/>
            <person name="Houston K.A."/>
            <person name="Howland T.J."/>
            <person name="Wei M.-H."/>
            <person name="Ibegwam C."/>
            <person name="Jalali M."/>
            <person name="Kalush F."/>
            <person name="Karpen G.H."/>
            <person name="Ke Z."/>
            <person name="Kennison J.A."/>
            <person name="Ketchum K.A."/>
            <person name="Kimmel B.E."/>
            <person name="Kodira C.D."/>
            <person name="Kraft C.L."/>
            <person name="Kravitz S."/>
            <person name="Kulp D."/>
            <person name="Lai Z."/>
            <person name="Lasko P."/>
            <person name="Lei Y."/>
            <person name="Levitsky A.A."/>
            <person name="Li J.H."/>
            <person name="Li Z."/>
            <person name="Liang Y."/>
            <person name="Lin X."/>
            <person name="Liu X."/>
            <person name="Mattei B."/>
            <person name="McIntosh T.C."/>
            <person name="McLeod M.P."/>
            <person name="McPherson D."/>
            <person name="Merkulov G."/>
            <person name="Milshina N.V."/>
            <person name="Mobarry C."/>
            <person name="Morris J."/>
            <person name="Moshrefi A."/>
            <person name="Mount S.M."/>
            <person name="Moy M."/>
            <person name="Murphy B."/>
            <person name="Murphy L."/>
            <person name="Muzny D.M."/>
            <person name="Nelson D.L."/>
            <person name="Nelson D.R."/>
            <person name="Nelson K.A."/>
            <person name="Nixon K."/>
            <person name="Nusskern D.R."/>
            <person name="Pacleb J.M."/>
            <person name="Palazzolo M."/>
            <person name="Pittman G.S."/>
            <person name="Pan S."/>
            <person name="Pollard J."/>
            <person name="Puri V."/>
            <person name="Reese M.G."/>
            <person name="Reinert K."/>
            <person name="Remington K."/>
            <person name="Saunders R.D.C."/>
            <person name="Scheeler F."/>
            <person name="Shen H."/>
            <person name="Shue B.C."/>
            <person name="Siden-Kiamos I."/>
            <person name="Simpson M."/>
            <person name="Skupski M.P."/>
            <person name="Smith T.J."/>
            <person name="Spier E."/>
            <person name="Spradling A.C."/>
            <person name="Stapleton M."/>
            <person name="Strong R."/>
            <person name="Sun E."/>
            <person name="Svirskas R."/>
            <person name="Tector C."/>
            <person name="Turner R."/>
            <person name="Venter E."/>
            <person name="Wang A.H."/>
            <person name="Wang X."/>
            <person name="Wang Z.-Y."/>
            <person name="Wassarman D.A."/>
            <person name="Weinstock G.M."/>
            <person name="Weissenbach J."/>
            <person name="Williams S.M."/>
            <person name="Woodage T."/>
            <person name="Worley K.C."/>
            <person name="Wu D."/>
            <person name="Yang S."/>
            <person name="Yao Q.A."/>
            <person name="Ye J."/>
            <person name="Yeh R.-F."/>
            <person name="Zaveri J.S."/>
            <person name="Zhan M."/>
            <person name="Zhang G."/>
            <person name="Zhao Q."/>
            <person name="Zheng L."/>
            <person name="Zheng X.H."/>
            <person name="Zhong F.N."/>
            <person name="Zhong W."/>
            <person name="Zhou X."/>
            <person name="Zhu S.C."/>
            <person name="Zhu X."/>
            <person name="Smith H.O."/>
            <person name="Gibbs R.A."/>
            <person name="Myers E.W."/>
            <person name="Rubin G.M."/>
            <person name="Venter J.C."/>
        </authorList>
    </citation>
    <scope>NUCLEOTIDE SEQUENCE [LARGE SCALE GENOMIC DNA]</scope>
    <source>
        <strain>Berkeley</strain>
    </source>
</reference>
<reference key="2">
    <citation type="journal article" date="2002" name="Genome Biol.">
        <title>Annotation of the Drosophila melanogaster euchromatic genome: a systematic review.</title>
        <authorList>
            <person name="Misra S."/>
            <person name="Crosby M.A."/>
            <person name="Mungall C.J."/>
            <person name="Matthews B.B."/>
            <person name="Campbell K.S."/>
            <person name="Hradecky P."/>
            <person name="Huang Y."/>
            <person name="Kaminker J.S."/>
            <person name="Millburn G.H."/>
            <person name="Prochnik S.E."/>
            <person name="Smith C.D."/>
            <person name="Tupy J.L."/>
            <person name="Whitfield E.J."/>
            <person name="Bayraktaroglu L."/>
            <person name="Berman B.P."/>
            <person name="Bettencourt B.R."/>
            <person name="Celniker S.E."/>
            <person name="de Grey A.D.N.J."/>
            <person name="Drysdale R.A."/>
            <person name="Harris N.L."/>
            <person name="Richter J."/>
            <person name="Russo S."/>
            <person name="Schroeder A.J."/>
            <person name="Shu S.Q."/>
            <person name="Stapleton M."/>
            <person name="Yamada C."/>
            <person name="Ashburner M."/>
            <person name="Gelbart W.M."/>
            <person name="Rubin G.M."/>
            <person name="Lewis S.E."/>
        </authorList>
    </citation>
    <scope>GENOME REANNOTATION</scope>
    <source>
        <strain>Berkeley</strain>
    </source>
</reference>
<reference key="3">
    <citation type="journal article" date="2002" name="Genome Biol.">
        <title>A Drosophila full-length cDNA resource.</title>
        <authorList>
            <person name="Stapleton M."/>
            <person name="Carlson J.W."/>
            <person name="Brokstein P."/>
            <person name="Yu C."/>
            <person name="Champe M."/>
            <person name="George R.A."/>
            <person name="Guarin H."/>
            <person name="Kronmiller B."/>
            <person name="Pacleb J.M."/>
            <person name="Park S."/>
            <person name="Wan K.H."/>
            <person name="Rubin G.M."/>
            <person name="Celniker S.E."/>
        </authorList>
    </citation>
    <scope>NUCLEOTIDE SEQUENCE [LARGE SCALE MRNA]</scope>
    <source>
        <strain>Berkeley</strain>
        <tissue>Embryo</tissue>
    </source>
</reference>